<feature type="chain" id="PRO_0000185946" description="Glutathione S-transferase A">
    <location>
        <begin position="1"/>
        <end position="225"/>
    </location>
</feature>
<feature type="domain" description="GST N-terminal">
    <location>
        <begin position="3"/>
        <end position="85"/>
    </location>
</feature>
<feature type="domain" description="GST C-terminal">
    <location>
        <begin position="92"/>
        <end position="217"/>
    </location>
</feature>
<feature type="binding site" evidence="2">
    <location>
        <position position="18"/>
    </location>
    <ligand>
        <name>glutathione</name>
        <dbReference type="ChEBI" id="CHEBI:57925"/>
    </ligand>
</feature>
<feature type="sequence conflict" description="In Ref. 1; figure 2." evidence="3" ref="1">
    <original>L</original>
    <variation>V</variation>
    <location>
        <position position="140"/>
    </location>
</feature>
<feature type="sequence conflict" description="In Ref. 1; figure 2." evidence="3" ref="1">
    <original>EL</original>
    <variation>DV</variation>
    <location>
        <begin position="143"/>
        <end position="144"/>
    </location>
</feature>
<feature type="sequence conflict" description="In Ref. 1; figure 2." evidence="3" ref="1">
    <original>WE</original>
    <variation>SQ</variation>
    <location>
        <begin position="147"/>
        <end position="148"/>
    </location>
</feature>
<comment type="function">
    <text>Conjugation of reduced glutathione to a wide number of exogenous and endogenous hydrophobic electrophiles.</text>
</comment>
<comment type="catalytic activity">
    <reaction>
        <text>RX + glutathione = an S-substituted glutathione + a halide anion + H(+)</text>
        <dbReference type="Rhea" id="RHEA:16437"/>
        <dbReference type="ChEBI" id="CHEBI:15378"/>
        <dbReference type="ChEBI" id="CHEBI:16042"/>
        <dbReference type="ChEBI" id="CHEBI:17792"/>
        <dbReference type="ChEBI" id="CHEBI:57925"/>
        <dbReference type="ChEBI" id="CHEBI:90779"/>
        <dbReference type="EC" id="2.5.1.18"/>
    </reaction>
</comment>
<comment type="subunit">
    <text evidence="1">Homodimer.</text>
</comment>
<comment type="subcellular location">
    <subcellularLocation>
        <location>Cytoplasm</location>
    </subcellularLocation>
</comment>
<comment type="tissue specificity">
    <text>Found in all the tissues examined. Highest values found in liver and in intestinal mucosa.</text>
</comment>
<comment type="induction">
    <text>By epoxides and by antioxidants.</text>
</comment>
<comment type="similarity">
    <text evidence="3">Belongs to the GST superfamily. Theta family.</text>
</comment>
<evidence type="ECO:0000250" key="1"/>
<evidence type="ECO:0000255" key="2"/>
<evidence type="ECO:0000305" key="3"/>
<name>GSTA_PLEPL</name>
<accession>P30568</accession>
<reference key="1">
    <citation type="journal article" date="1993" name="Biochem. J.">
        <title>Cloning and characterization of the major hepatic glutathione S-transferase from a marine teleost flatfish, the plaice (Pleuronectes platessa), with structural similarities to plant, insect and mammalian Theta class isoenzymes.</title>
        <authorList>
            <person name="Leaver M.J."/>
            <person name="Scott K."/>
            <person name="George S.G."/>
        </authorList>
    </citation>
    <scope>NUCLEOTIDE SEQUENCE [MRNA]</scope>
    <source>
        <tissue>Liver</tissue>
    </source>
</reference>
<protein>
    <recommendedName>
        <fullName>Glutathione S-transferase A</fullName>
        <shortName>GST-A</shortName>
        <ecNumber>2.5.1.18</ecNumber>
    </recommendedName>
    <alternativeName>
        <fullName>GST class-theta</fullName>
    </alternativeName>
</protein>
<sequence length="225" mass="25724">MAKDMTLLWGSGSPPCWRVMIVLEEKNLQAYNSKLLSFEKGEHKSAEVMSMNPRGQLPSFKHGSKVLNESYAACMYLESQFKSQGNKLIPDCPAEQAMMYQRMFEGLTLAQKMADVIYYSWKVPEAERHDSAVKRNKENLSTELKLWEEYLQKTSGSFVAGKSFSLADVSVFPGVAYLFRFGLTEERYPQLTAYYNSLKERPSIKASWPPTWLESPQGQDMLKDV</sequence>
<keyword id="KW-0963">Cytoplasm</keyword>
<keyword id="KW-0808">Transferase</keyword>
<dbReference type="EC" id="2.5.1.18"/>
<dbReference type="EMBL" id="X63761">
    <property type="protein sequence ID" value="CAA45293.1"/>
    <property type="molecule type" value="mRNA"/>
</dbReference>
<dbReference type="PIR" id="S33308">
    <property type="entry name" value="S33308"/>
</dbReference>
<dbReference type="SMR" id="P30568"/>
<dbReference type="GO" id="GO:0005739">
    <property type="term" value="C:mitochondrion"/>
    <property type="evidence" value="ECO:0007669"/>
    <property type="project" value="TreeGrafter"/>
</dbReference>
<dbReference type="GO" id="GO:0004364">
    <property type="term" value="F:glutathione transferase activity"/>
    <property type="evidence" value="ECO:0007669"/>
    <property type="project" value="UniProtKB-EC"/>
</dbReference>
<dbReference type="GO" id="GO:0016034">
    <property type="term" value="F:maleylacetoacetate isomerase activity"/>
    <property type="evidence" value="ECO:0007669"/>
    <property type="project" value="TreeGrafter"/>
</dbReference>
<dbReference type="GO" id="GO:0006749">
    <property type="term" value="P:glutathione metabolic process"/>
    <property type="evidence" value="ECO:0007669"/>
    <property type="project" value="TreeGrafter"/>
</dbReference>
<dbReference type="GO" id="GO:0006559">
    <property type="term" value="P:L-phenylalanine catabolic process"/>
    <property type="evidence" value="ECO:0007669"/>
    <property type="project" value="TreeGrafter"/>
</dbReference>
<dbReference type="CDD" id="cd00299">
    <property type="entry name" value="GST_C_family"/>
    <property type="match status" value="1"/>
</dbReference>
<dbReference type="CDD" id="cd00570">
    <property type="entry name" value="GST_N_family"/>
    <property type="match status" value="1"/>
</dbReference>
<dbReference type="FunFam" id="1.20.1050.10:FF:000046">
    <property type="entry name" value="Glutathione S-transferase rho"/>
    <property type="match status" value="1"/>
</dbReference>
<dbReference type="FunFam" id="3.40.30.10:FF:000221">
    <property type="entry name" value="Glutathione S-transferase rho"/>
    <property type="match status" value="1"/>
</dbReference>
<dbReference type="Gene3D" id="1.20.1050.10">
    <property type="match status" value="1"/>
</dbReference>
<dbReference type="Gene3D" id="3.40.30.10">
    <property type="entry name" value="Glutaredoxin"/>
    <property type="match status" value="1"/>
</dbReference>
<dbReference type="InterPro" id="IPR010987">
    <property type="entry name" value="Glutathione-S-Trfase_C-like"/>
</dbReference>
<dbReference type="InterPro" id="IPR036282">
    <property type="entry name" value="Glutathione-S-Trfase_C_sf"/>
</dbReference>
<dbReference type="InterPro" id="IPR040079">
    <property type="entry name" value="Glutathione_S-Trfase"/>
</dbReference>
<dbReference type="InterPro" id="IPR004045">
    <property type="entry name" value="Glutathione_S-Trfase_N"/>
</dbReference>
<dbReference type="InterPro" id="IPR004046">
    <property type="entry name" value="GST_C"/>
</dbReference>
<dbReference type="InterPro" id="IPR036249">
    <property type="entry name" value="Thioredoxin-like_sf"/>
</dbReference>
<dbReference type="PANTHER" id="PTHR42673">
    <property type="entry name" value="MALEYLACETOACETATE ISOMERASE"/>
    <property type="match status" value="1"/>
</dbReference>
<dbReference type="PANTHER" id="PTHR42673:SF4">
    <property type="entry name" value="MALEYLACETOACETATE ISOMERASE"/>
    <property type="match status" value="1"/>
</dbReference>
<dbReference type="Pfam" id="PF14497">
    <property type="entry name" value="GST_C_3"/>
    <property type="match status" value="1"/>
</dbReference>
<dbReference type="Pfam" id="PF13409">
    <property type="entry name" value="GST_N_2"/>
    <property type="match status" value="1"/>
</dbReference>
<dbReference type="SFLD" id="SFLDS00019">
    <property type="entry name" value="Glutathione_Transferase_(cytos"/>
    <property type="match status" value="1"/>
</dbReference>
<dbReference type="SFLD" id="SFLDG00358">
    <property type="entry name" value="Main_(cytGST)"/>
    <property type="match status" value="1"/>
</dbReference>
<dbReference type="SUPFAM" id="SSF47616">
    <property type="entry name" value="GST C-terminal domain-like"/>
    <property type="match status" value="1"/>
</dbReference>
<dbReference type="SUPFAM" id="SSF52833">
    <property type="entry name" value="Thioredoxin-like"/>
    <property type="match status" value="1"/>
</dbReference>
<dbReference type="PROSITE" id="PS50405">
    <property type="entry name" value="GST_CTER"/>
    <property type="match status" value="1"/>
</dbReference>
<dbReference type="PROSITE" id="PS50404">
    <property type="entry name" value="GST_NTER"/>
    <property type="match status" value="1"/>
</dbReference>
<proteinExistence type="evidence at transcript level"/>
<organism>
    <name type="scientific">Pleuronectes platessa</name>
    <name type="common">European plaice</name>
    <dbReference type="NCBI Taxonomy" id="8262"/>
    <lineage>
        <taxon>Eukaryota</taxon>
        <taxon>Metazoa</taxon>
        <taxon>Chordata</taxon>
        <taxon>Craniata</taxon>
        <taxon>Vertebrata</taxon>
        <taxon>Euteleostomi</taxon>
        <taxon>Actinopterygii</taxon>
        <taxon>Neopterygii</taxon>
        <taxon>Teleostei</taxon>
        <taxon>Neoteleostei</taxon>
        <taxon>Acanthomorphata</taxon>
        <taxon>Carangaria</taxon>
        <taxon>Pleuronectiformes</taxon>
        <taxon>Pleuronectoidei</taxon>
        <taxon>Pleuronectidae</taxon>
        <taxon>Pleuronectes</taxon>
    </lineage>
</organism>